<gene>
    <name evidence="1" type="primary">pyrF</name>
    <name type="ordered locus">MAP_1120</name>
</gene>
<protein>
    <recommendedName>
        <fullName evidence="1">Orotidine 5'-phosphate decarboxylase</fullName>
        <ecNumber evidence="1">4.1.1.23</ecNumber>
    </recommendedName>
    <alternativeName>
        <fullName evidence="1">OMP decarboxylase</fullName>
        <shortName evidence="1">OMPDCase</shortName>
        <shortName evidence="1">OMPdecase</shortName>
    </alternativeName>
</protein>
<proteinExistence type="inferred from homology"/>
<sequence>MTGFGARLAAAKAQRGPLCVGIDPHPELLRAWDLPTTADGLAAFCDICVEAFAGFAVVKPQVAFFEAYGAAGFAVLERTIAALRSAGVLVLADAKRGDIGTTMAAYAAAWAGDSPLAADAVTASPYLGFGSLRPLLEAAAAHDRGVFVLAATSNPEGATVQRAAFDGRTVAQLVVDQAAVVNRSTNPAGPGYVGVVVGATVLQPPDLSALGGPVLVPGLGVQGGRPEALAGLGGAEPGQLLPAVAREVLRAGPDVAELRAAADRMLDAVAYLDA</sequence>
<feature type="chain" id="PRO_1000066478" description="Orotidine 5'-phosphate decarboxylase">
    <location>
        <begin position="1"/>
        <end position="274"/>
    </location>
</feature>
<feature type="active site" description="Proton donor" evidence="1">
    <location>
        <position position="95"/>
    </location>
</feature>
<keyword id="KW-0210">Decarboxylase</keyword>
<keyword id="KW-0456">Lyase</keyword>
<keyword id="KW-0665">Pyrimidine biosynthesis</keyword>
<keyword id="KW-1185">Reference proteome</keyword>
<accession>Q741H0</accession>
<evidence type="ECO:0000255" key="1">
    <source>
        <dbReference type="HAMAP-Rule" id="MF_01215"/>
    </source>
</evidence>
<organism>
    <name type="scientific">Mycolicibacterium paratuberculosis (strain ATCC BAA-968 / K-10)</name>
    <name type="common">Mycobacterium paratuberculosis</name>
    <dbReference type="NCBI Taxonomy" id="262316"/>
    <lineage>
        <taxon>Bacteria</taxon>
        <taxon>Bacillati</taxon>
        <taxon>Actinomycetota</taxon>
        <taxon>Actinomycetes</taxon>
        <taxon>Mycobacteriales</taxon>
        <taxon>Mycobacteriaceae</taxon>
        <taxon>Mycobacterium</taxon>
        <taxon>Mycobacterium avium complex (MAC)</taxon>
    </lineage>
</organism>
<reference key="1">
    <citation type="journal article" date="2005" name="Proc. Natl. Acad. Sci. U.S.A.">
        <title>The complete genome sequence of Mycobacterium avium subspecies paratuberculosis.</title>
        <authorList>
            <person name="Li L."/>
            <person name="Bannantine J.P."/>
            <person name="Zhang Q."/>
            <person name="Amonsin A."/>
            <person name="May B.J."/>
            <person name="Alt D."/>
            <person name="Banerji N."/>
            <person name="Kanjilal S."/>
            <person name="Kapur V."/>
        </authorList>
    </citation>
    <scope>NUCLEOTIDE SEQUENCE [LARGE SCALE GENOMIC DNA]</scope>
    <source>
        <strain>ATCC BAA-968 / K-10</strain>
    </source>
</reference>
<name>PYRF_MYCPA</name>
<comment type="catalytic activity">
    <reaction evidence="1">
        <text>orotidine 5'-phosphate + H(+) = UMP + CO2</text>
        <dbReference type="Rhea" id="RHEA:11596"/>
        <dbReference type="ChEBI" id="CHEBI:15378"/>
        <dbReference type="ChEBI" id="CHEBI:16526"/>
        <dbReference type="ChEBI" id="CHEBI:57538"/>
        <dbReference type="ChEBI" id="CHEBI:57865"/>
        <dbReference type="EC" id="4.1.1.23"/>
    </reaction>
</comment>
<comment type="pathway">
    <text evidence="1">Pyrimidine metabolism; UMP biosynthesis via de novo pathway; UMP from orotate: step 2/2.</text>
</comment>
<comment type="similarity">
    <text evidence="1">Belongs to the OMP decarboxylase family. Type 2 subfamily.</text>
</comment>
<dbReference type="EC" id="4.1.1.23" evidence="1"/>
<dbReference type="EMBL" id="AE016958">
    <property type="protein sequence ID" value="AAS03437.1"/>
    <property type="molecule type" value="Genomic_DNA"/>
</dbReference>
<dbReference type="RefSeq" id="WP_003872559.1">
    <property type="nucleotide sequence ID" value="NC_002944.2"/>
</dbReference>
<dbReference type="SMR" id="Q741H0"/>
<dbReference type="STRING" id="262316.MAP_1120"/>
<dbReference type="KEGG" id="mpa:MAP_1120"/>
<dbReference type="eggNOG" id="COG0284">
    <property type="taxonomic scope" value="Bacteria"/>
</dbReference>
<dbReference type="HOGENOM" id="CLU_060704_0_0_11"/>
<dbReference type="UniPathway" id="UPA00070">
    <property type="reaction ID" value="UER00120"/>
</dbReference>
<dbReference type="Proteomes" id="UP000000580">
    <property type="component" value="Chromosome"/>
</dbReference>
<dbReference type="GO" id="GO:0004590">
    <property type="term" value="F:orotidine-5'-phosphate decarboxylase activity"/>
    <property type="evidence" value="ECO:0007669"/>
    <property type="project" value="UniProtKB-UniRule"/>
</dbReference>
<dbReference type="GO" id="GO:0006207">
    <property type="term" value="P:'de novo' pyrimidine nucleobase biosynthetic process"/>
    <property type="evidence" value="ECO:0007669"/>
    <property type="project" value="InterPro"/>
</dbReference>
<dbReference type="GO" id="GO:0044205">
    <property type="term" value="P:'de novo' UMP biosynthetic process"/>
    <property type="evidence" value="ECO:0007669"/>
    <property type="project" value="UniProtKB-UniRule"/>
</dbReference>
<dbReference type="CDD" id="cd04725">
    <property type="entry name" value="OMP_decarboxylase_like"/>
    <property type="match status" value="1"/>
</dbReference>
<dbReference type="Gene3D" id="3.20.20.70">
    <property type="entry name" value="Aldolase class I"/>
    <property type="match status" value="1"/>
</dbReference>
<dbReference type="HAMAP" id="MF_01215">
    <property type="entry name" value="OMPdecase_type2"/>
    <property type="match status" value="1"/>
</dbReference>
<dbReference type="InterPro" id="IPR013785">
    <property type="entry name" value="Aldolase_TIM"/>
</dbReference>
<dbReference type="InterPro" id="IPR018089">
    <property type="entry name" value="OMPdecase_AS"/>
</dbReference>
<dbReference type="InterPro" id="IPR011995">
    <property type="entry name" value="OMPdecase_type-2"/>
</dbReference>
<dbReference type="InterPro" id="IPR001754">
    <property type="entry name" value="OMPdeCOase_dom"/>
</dbReference>
<dbReference type="InterPro" id="IPR011060">
    <property type="entry name" value="RibuloseP-bd_barrel"/>
</dbReference>
<dbReference type="NCBIfam" id="TIGR02127">
    <property type="entry name" value="pyrF_sub2"/>
    <property type="match status" value="1"/>
</dbReference>
<dbReference type="PANTHER" id="PTHR43375">
    <property type="entry name" value="OROTIDINE 5'-PHOSPHATE DECARBOXYLASE"/>
    <property type="match status" value="1"/>
</dbReference>
<dbReference type="PANTHER" id="PTHR43375:SF1">
    <property type="entry name" value="OROTIDINE 5'-PHOSPHATE DECARBOXYLASE"/>
    <property type="match status" value="1"/>
</dbReference>
<dbReference type="Pfam" id="PF00215">
    <property type="entry name" value="OMPdecase"/>
    <property type="match status" value="1"/>
</dbReference>
<dbReference type="SMART" id="SM00934">
    <property type="entry name" value="OMPdecase"/>
    <property type="match status" value="1"/>
</dbReference>
<dbReference type="SUPFAM" id="SSF51366">
    <property type="entry name" value="Ribulose-phoshate binding barrel"/>
    <property type="match status" value="1"/>
</dbReference>
<dbReference type="PROSITE" id="PS00156">
    <property type="entry name" value="OMPDECASE"/>
    <property type="match status" value="1"/>
</dbReference>